<accession>A1AD94</accession>
<sequence length="419" mass="45342">MRFDTVIMGGGLAGLLCGLQLQKHGLRCAIVTRGQSALHFSSGSLDLLSHLPDGQPVTDIHSGLESLRQQAPAHPYTLLGPQRVLDLACQAQALIAESGAQLQGSVELAHQRITPLGTLRSTWLSSPEVPVWPLPAKKICVVGISGLMDFQAHLAAASLRELDLAVETAEIELPELDVLRNNATEFRAVNIARFLDNEENWPLIIDALIPVANTCEMILMPACFGLADDKLWRWLNEKLPCSLMLLPTLPPSVLGIRLQNQLQRQFVRQGGVWMPGDEVKKVTCKNGVVNEIWTRNHADIPLRPRFAVLASGSFFSGGLVAERDGIREPILGLDVLQTATRGEWYKGDFFAPQPWQQFGVTTDEALRPSQAGQTIENLFAIGSVLGGFDPIAQGCGGGVCAVSALHAAQQIAQRAGGQQ</sequence>
<protein>
    <recommendedName>
        <fullName evidence="1">Anaerobic glycerol-3-phosphate dehydrogenase subunit B</fullName>
        <shortName evidence="1">Anaerobic G-3-P dehydrogenase subunit B</shortName>
        <shortName evidence="1">Anaerobic G3Pdhase B</shortName>
        <ecNumber evidence="1">1.1.5.3</ecNumber>
    </recommendedName>
</protein>
<dbReference type="EC" id="1.1.5.3" evidence="1"/>
<dbReference type="EMBL" id="CP000468">
    <property type="protein sequence ID" value="ABJ01634.1"/>
    <property type="molecule type" value="Genomic_DNA"/>
</dbReference>
<dbReference type="RefSeq" id="WP_001209932.1">
    <property type="nucleotide sequence ID" value="NZ_CADILS010000004.1"/>
</dbReference>
<dbReference type="KEGG" id="ecv:APECO1_4319"/>
<dbReference type="HOGENOM" id="CLU_047793_0_0_6"/>
<dbReference type="UniPathway" id="UPA00618">
    <property type="reaction ID" value="UER00673"/>
</dbReference>
<dbReference type="Proteomes" id="UP000008216">
    <property type="component" value="Chromosome"/>
</dbReference>
<dbReference type="GO" id="GO:0009331">
    <property type="term" value="C:glycerol-3-phosphate dehydrogenase (FAD) complex"/>
    <property type="evidence" value="ECO:0007669"/>
    <property type="project" value="InterPro"/>
</dbReference>
<dbReference type="GO" id="GO:0004368">
    <property type="term" value="F:glycerol-3-phosphate dehydrogenase (quinone) activity"/>
    <property type="evidence" value="ECO:0007669"/>
    <property type="project" value="UniProtKB-UniRule"/>
</dbReference>
<dbReference type="GO" id="GO:0009061">
    <property type="term" value="P:anaerobic respiration"/>
    <property type="evidence" value="ECO:0007669"/>
    <property type="project" value="TreeGrafter"/>
</dbReference>
<dbReference type="GO" id="GO:0019563">
    <property type="term" value="P:glycerol catabolic process"/>
    <property type="evidence" value="ECO:0007669"/>
    <property type="project" value="UniProtKB-UniRule"/>
</dbReference>
<dbReference type="GO" id="GO:0046168">
    <property type="term" value="P:glycerol-3-phosphate catabolic process"/>
    <property type="evidence" value="ECO:0007669"/>
    <property type="project" value="TreeGrafter"/>
</dbReference>
<dbReference type="Gene3D" id="3.50.50.60">
    <property type="entry name" value="FAD/NAD(P)-binding domain"/>
    <property type="match status" value="1"/>
</dbReference>
<dbReference type="HAMAP" id="MF_00753">
    <property type="entry name" value="Glycerol3P_GlpB"/>
    <property type="match status" value="1"/>
</dbReference>
<dbReference type="InterPro" id="IPR003953">
    <property type="entry name" value="FAD-dep_OxRdtase_2_FAD-bd"/>
</dbReference>
<dbReference type="InterPro" id="IPR050315">
    <property type="entry name" value="FAD-oxidoreductase_2"/>
</dbReference>
<dbReference type="InterPro" id="IPR036188">
    <property type="entry name" value="FAD/NAD-bd_sf"/>
</dbReference>
<dbReference type="InterPro" id="IPR009158">
    <property type="entry name" value="G3P_DH_GlpB_su"/>
</dbReference>
<dbReference type="NCBIfam" id="TIGR03378">
    <property type="entry name" value="glycerol3P_GlpB"/>
    <property type="match status" value="1"/>
</dbReference>
<dbReference type="NCBIfam" id="NF003718">
    <property type="entry name" value="PRK05329.1-1"/>
    <property type="match status" value="1"/>
</dbReference>
<dbReference type="NCBIfam" id="NF003719">
    <property type="entry name" value="PRK05329.1-2"/>
    <property type="match status" value="1"/>
</dbReference>
<dbReference type="NCBIfam" id="NF003720">
    <property type="entry name" value="PRK05329.1-3"/>
    <property type="match status" value="1"/>
</dbReference>
<dbReference type="NCBIfam" id="NF003721">
    <property type="entry name" value="PRK05329.1-4"/>
    <property type="match status" value="1"/>
</dbReference>
<dbReference type="PANTHER" id="PTHR43400:SF11">
    <property type="entry name" value="ANAEROBIC GLYCEROL-3-PHOSPHATE DEHYDROGENASE SUBUNIT B"/>
    <property type="match status" value="1"/>
</dbReference>
<dbReference type="PANTHER" id="PTHR43400">
    <property type="entry name" value="FUMARATE REDUCTASE"/>
    <property type="match status" value="1"/>
</dbReference>
<dbReference type="Pfam" id="PF00890">
    <property type="entry name" value="FAD_binding_2"/>
    <property type="match status" value="1"/>
</dbReference>
<dbReference type="PIRSF" id="PIRSF000141">
    <property type="entry name" value="Anaerobic_G3P_dh"/>
    <property type="match status" value="1"/>
</dbReference>
<dbReference type="SUPFAM" id="SSF51905">
    <property type="entry name" value="FAD/NAD(P)-binding domain"/>
    <property type="match status" value="1"/>
</dbReference>
<feature type="chain" id="PRO_1000046603" description="Anaerobic glycerol-3-phosphate dehydrogenase subunit B">
    <location>
        <begin position="1"/>
        <end position="419"/>
    </location>
</feature>
<proteinExistence type="inferred from homology"/>
<name>GLPB_ECOK1</name>
<reference key="1">
    <citation type="journal article" date="2007" name="J. Bacteriol.">
        <title>The genome sequence of avian pathogenic Escherichia coli strain O1:K1:H7 shares strong similarities with human extraintestinal pathogenic E. coli genomes.</title>
        <authorList>
            <person name="Johnson T.J."/>
            <person name="Kariyawasam S."/>
            <person name="Wannemuehler Y."/>
            <person name="Mangiamele P."/>
            <person name="Johnson S.J."/>
            <person name="Doetkott C."/>
            <person name="Skyberg J.A."/>
            <person name="Lynne A.M."/>
            <person name="Johnson J.R."/>
            <person name="Nolan L.K."/>
        </authorList>
    </citation>
    <scope>NUCLEOTIDE SEQUENCE [LARGE SCALE GENOMIC DNA]</scope>
</reference>
<gene>
    <name evidence="1" type="primary">glpB</name>
    <name type="ordered locus">Ecok1_21400</name>
    <name type="ORF">APECO1_4319</name>
</gene>
<comment type="function">
    <text evidence="1">Conversion of glycerol 3-phosphate to dihydroxyacetone. Uses fumarate or nitrate as electron acceptor.</text>
</comment>
<comment type="catalytic activity">
    <reaction evidence="1">
        <text>a quinone + sn-glycerol 3-phosphate = dihydroxyacetone phosphate + a quinol</text>
        <dbReference type="Rhea" id="RHEA:18977"/>
        <dbReference type="ChEBI" id="CHEBI:24646"/>
        <dbReference type="ChEBI" id="CHEBI:57597"/>
        <dbReference type="ChEBI" id="CHEBI:57642"/>
        <dbReference type="ChEBI" id="CHEBI:132124"/>
        <dbReference type="EC" id="1.1.5.3"/>
    </reaction>
</comment>
<comment type="cofactor">
    <cofactor evidence="1">
        <name>FMN</name>
        <dbReference type="ChEBI" id="CHEBI:58210"/>
    </cofactor>
</comment>
<comment type="pathway">
    <text evidence="1">Polyol metabolism; glycerol degradation via glycerol kinase pathway; glycerone phosphate from sn-glycerol 3-phosphate (anaerobic route): step 1/1.</text>
</comment>
<comment type="subunit">
    <text evidence="1">Composed of a catalytic GlpA/B dimer and of membrane bound GlpC.</text>
</comment>
<comment type="similarity">
    <text evidence="1">Belongs to the anaerobic G-3-P dehydrogenase subunit B family.</text>
</comment>
<keyword id="KW-0285">Flavoprotein</keyword>
<keyword id="KW-0288">FMN</keyword>
<keyword id="KW-0560">Oxidoreductase</keyword>
<keyword id="KW-1185">Reference proteome</keyword>
<evidence type="ECO:0000255" key="1">
    <source>
        <dbReference type="HAMAP-Rule" id="MF_00753"/>
    </source>
</evidence>
<organism>
    <name type="scientific">Escherichia coli O1:K1 / APEC</name>
    <dbReference type="NCBI Taxonomy" id="405955"/>
    <lineage>
        <taxon>Bacteria</taxon>
        <taxon>Pseudomonadati</taxon>
        <taxon>Pseudomonadota</taxon>
        <taxon>Gammaproteobacteria</taxon>
        <taxon>Enterobacterales</taxon>
        <taxon>Enterobacteriaceae</taxon>
        <taxon>Escherichia</taxon>
    </lineage>
</organism>